<keyword id="KW-0025">Alternative splicing</keyword>
<keyword id="KW-1185">Reference proteome</keyword>
<feature type="chain" id="PRO_0000402135" description="Uncharacterized protein C16orf86 homolog">
    <location>
        <begin position="1"/>
        <end position="307"/>
    </location>
</feature>
<feature type="region of interest" description="Disordered" evidence="1">
    <location>
        <begin position="42"/>
        <end position="153"/>
    </location>
</feature>
<feature type="compositionally biased region" description="Basic and acidic residues" evidence="1">
    <location>
        <begin position="42"/>
        <end position="52"/>
    </location>
</feature>
<feature type="compositionally biased region" description="Basic and acidic residues" evidence="1">
    <location>
        <begin position="112"/>
        <end position="121"/>
    </location>
</feature>
<feature type="compositionally biased region" description="Basic residues" evidence="1">
    <location>
        <begin position="129"/>
        <end position="139"/>
    </location>
</feature>
<feature type="splice variant" id="VSP_040246" description="In isoform 2." evidence="2">
    <original>PFALPWVLAG</original>
    <variation>R</variation>
    <location>
        <begin position="163"/>
        <end position="172"/>
    </location>
</feature>
<protein>
    <recommendedName>
        <fullName>Uncharacterized protein C16orf86 homolog</fullName>
    </recommendedName>
</protein>
<dbReference type="EMBL" id="AK016673">
    <property type="protein sequence ID" value="BAB30372.1"/>
    <property type="molecule type" value="mRNA"/>
</dbReference>
<dbReference type="EMBL" id="CH466525">
    <property type="protein sequence ID" value="EDL11312.1"/>
    <property type="molecule type" value="Genomic_DNA"/>
</dbReference>
<dbReference type="EMBL" id="BC125412">
    <property type="protein sequence ID" value="AAI25413.1"/>
    <property type="molecule type" value="mRNA"/>
</dbReference>
<dbReference type="EMBL" id="BC138007">
    <property type="protein sequence ID" value="AAI38008.1"/>
    <property type="molecule type" value="mRNA"/>
</dbReference>
<dbReference type="EMBL" id="BC145093">
    <property type="protein sequence ID" value="AAI45094.1"/>
    <property type="molecule type" value="mRNA"/>
</dbReference>
<dbReference type="CCDS" id="CCDS52661.1">
    <molecule id="Q9D4A5-1"/>
</dbReference>
<dbReference type="CCDS" id="CCDS90453.1">
    <molecule id="Q9D4A5-2"/>
</dbReference>
<dbReference type="RefSeq" id="NP_001344185.1">
    <molecule id="Q9D4A5-2"/>
    <property type="nucleotide sequence ID" value="NM_001357256.1"/>
</dbReference>
<dbReference type="RefSeq" id="NP_081931.1">
    <molecule id="Q9D4A5-1"/>
    <property type="nucleotide sequence ID" value="NM_027655.2"/>
</dbReference>
<dbReference type="RefSeq" id="XP_006531432.1">
    <property type="nucleotide sequence ID" value="XM_006531369.2"/>
</dbReference>
<dbReference type="FunCoup" id="Q9D4A5">
    <property type="interactions" value="1"/>
</dbReference>
<dbReference type="GlyGen" id="Q9D4A5">
    <property type="glycosylation" value="1 site"/>
</dbReference>
<dbReference type="iPTMnet" id="Q9D4A5"/>
<dbReference type="PhosphoSitePlus" id="Q9D4A5"/>
<dbReference type="PaxDb" id="10090-ENSMUSP00000013302"/>
<dbReference type="Antibodypedia" id="49357">
    <property type="antibodies" value="5 antibodies from 5 providers"/>
</dbReference>
<dbReference type="Ensembl" id="ENSMUST00000013302.7">
    <molecule id="Q9D4A5-1"/>
    <property type="protein sequence ID" value="ENSMUSP00000013302.6"/>
    <property type="gene ID" value="ENSMUSG00000013158.7"/>
</dbReference>
<dbReference type="Ensembl" id="ENSMUST00000211852.2">
    <molecule id="Q9D4A5-2"/>
    <property type="protein sequence ID" value="ENSMUSP00000148838.2"/>
    <property type="gene ID" value="ENSMUSG00000013158.7"/>
</dbReference>
<dbReference type="GeneID" id="71046"/>
<dbReference type="KEGG" id="mmu:71046"/>
<dbReference type="UCSC" id="uc009nea.2">
    <molecule id="Q9D4A5-1"/>
    <property type="organism name" value="mouse"/>
</dbReference>
<dbReference type="UCSC" id="uc012gjo.1">
    <molecule id="Q9D4A5-2"/>
    <property type="organism name" value="mouse"/>
</dbReference>
<dbReference type="AGR" id="MGI:1918296"/>
<dbReference type="MGI" id="MGI:1918296">
    <property type="gene designation" value="4933405L10Rik"/>
</dbReference>
<dbReference type="VEuPathDB" id="HostDB:ENSMUSG00000013158"/>
<dbReference type="eggNOG" id="ENOG502SVW5">
    <property type="taxonomic scope" value="Eukaryota"/>
</dbReference>
<dbReference type="GeneTree" id="ENSGT00390000011138"/>
<dbReference type="HOGENOM" id="CLU_943194_0_0_1"/>
<dbReference type="InParanoid" id="Q9D4A5"/>
<dbReference type="OMA" id="VDINKML"/>
<dbReference type="OrthoDB" id="90339at9989"/>
<dbReference type="PhylomeDB" id="Q9D4A5"/>
<dbReference type="TreeFam" id="TF337136"/>
<dbReference type="BioGRID-ORCS" id="71046">
    <property type="hits" value="8 hits in 77 CRISPR screens"/>
</dbReference>
<dbReference type="PRO" id="PR:Q9D4A5"/>
<dbReference type="Proteomes" id="UP000000589">
    <property type="component" value="Chromosome 8"/>
</dbReference>
<dbReference type="RNAct" id="Q9D4A5">
    <property type="molecule type" value="protein"/>
</dbReference>
<dbReference type="Bgee" id="ENSMUSG00000013158">
    <property type="expression patterns" value="Expressed in seminiferous tubule of testis and 10 other cell types or tissues"/>
</dbReference>
<dbReference type="InterPro" id="IPR031516">
    <property type="entry name" value="DUF4691"/>
</dbReference>
<dbReference type="PANTHER" id="PTHR37867">
    <property type="entry name" value="CHROMOSOME 16 OPEN READING FRAME 86"/>
    <property type="match status" value="1"/>
</dbReference>
<dbReference type="PANTHER" id="PTHR37867:SF1">
    <property type="entry name" value="CHROMOSOME 16 OPEN READING FRAME 86"/>
    <property type="match status" value="1"/>
</dbReference>
<dbReference type="Pfam" id="PF15762">
    <property type="entry name" value="DUF4691"/>
    <property type="match status" value="1"/>
</dbReference>
<proteinExistence type="evidence at protein level"/>
<accession>Q9D4A5</accession>
<accession>B7ZN89</accession>
<name>CP086_MOUSE</name>
<comment type="alternative products">
    <event type="alternative splicing"/>
    <isoform>
        <id>Q9D4A5-1</id>
        <name>1</name>
        <sequence type="displayed"/>
    </isoform>
    <isoform>
        <id>Q9D4A5-2</id>
        <name>2</name>
        <sequence type="described" ref="VSP_040246"/>
    </isoform>
</comment>
<organism>
    <name type="scientific">Mus musculus</name>
    <name type="common">Mouse</name>
    <dbReference type="NCBI Taxonomy" id="10090"/>
    <lineage>
        <taxon>Eukaryota</taxon>
        <taxon>Metazoa</taxon>
        <taxon>Chordata</taxon>
        <taxon>Craniata</taxon>
        <taxon>Vertebrata</taxon>
        <taxon>Euteleostomi</taxon>
        <taxon>Mammalia</taxon>
        <taxon>Eutheria</taxon>
        <taxon>Euarchontoglires</taxon>
        <taxon>Glires</taxon>
        <taxon>Rodentia</taxon>
        <taxon>Myomorpha</taxon>
        <taxon>Muroidea</taxon>
        <taxon>Muridae</taxon>
        <taxon>Murinae</taxon>
        <taxon>Mus</taxon>
        <taxon>Mus</taxon>
    </lineage>
</organism>
<sequence>MASEGAKRQPETQNGAAVGLAQVAESLECPGTEECLVPAHETCRSPGEDKCPVGHSLEPELQEEGIKVGEEGLNAGVEAGEERGPKPTSSIVRPAHGPKRKSEVELPPGVLQKKEEPEGSHSESSLSSKQHKKAKKRKSGGAPVPPAVASASAPAAETLGLEPFALPWVLAGKAQRLRPLYQYINYCNPELNQEEDGDREPEVEPEAELALVPEEPGVEQLQLQTLLPVAGELGLGLALPCPNPLVPLTHNLPPLVEEVGEEPGGLSSLRVSGSLKAEVDKTTQVDIDKMLSVCAAPLVPPLSPQYK</sequence>
<reference key="1">
    <citation type="journal article" date="2005" name="Science">
        <title>The transcriptional landscape of the mammalian genome.</title>
        <authorList>
            <person name="Carninci P."/>
            <person name="Kasukawa T."/>
            <person name="Katayama S."/>
            <person name="Gough J."/>
            <person name="Frith M.C."/>
            <person name="Maeda N."/>
            <person name="Oyama R."/>
            <person name="Ravasi T."/>
            <person name="Lenhard B."/>
            <person name="Wells C."/>
            <person name="Kodzius R."/>
            <person name="Shimokawa K."/>
            <person name="Bajic V.B."/>
            <person name="Brenner S.E."/>
            <person name="Batalov S."/>
            <person name="Forrest A.R."/>
            <person name="Zavolan M."/>
            <person name="Davis M.J."/>
            <person name="Wilming L.G."/>
            <person name="Aidinis V."/>
            <person name="Allen J.E."/>
            <person name="Ambesi-Impiombato A."/>
            <person name="Apweiler R."/>
            <person name="Aturaliya R.N."/>
            <person name="Bailey T.L."/>
            <person name="Bansal M."/>
            <person name="Baxter L."/>
            <person name="Beisel K.W."/>
            <person name="Bersano T."/>
            <person name="Bono H."/>
            <person name="Chalk A.M."/>
            <person name="Chiu K.P."/>
            <person name="Choudhary V."/>
            <person name="Christoffels A."/>
            <person name="Clutterbuck D.R."/>
            <person name="Crowe M.L."/>
            <person name="Dalla E."/>
            <person name="Dalrymple B.P."/>
            <person name="de Bono B."/>
            <person name="Della Gatta G."/>
            <person name="di Bernardo D."/>
            <person name="Down T."/>
            <person name="Engstrom P."/>
            <person name="Fagiolini M."/>
            <person name="Faulkner G."/>
            <person name="Fletcher C.F."/>
            <person name="Fukushima T."/>
            <person name="Furuno M."/>
            <person name="Futaki S."/>
            <person name="Gariboldi M."/>
            <person name="Georgii-Hemming P."/>
            <person name="Gingeras T.R."/>
            <person name="Gojobori T."/>
            <person name="Green R.E."/>
            <person name="Gustincich S."/>
            <person name="Harbers M."/>
            <person name="Hayashi Y."/>
            <person name="Hensch T.K."/>
            <person name="Hirokawa N."/>
            <person name="Hill D."/>
            <person name="Huminiecki L."/>
            <person name="Iacono M."/>
            <person name="Ikeo K."/>
            <person name="Iwama A."/>
            <person name="Ishikawa T."/>
            <person name="Jakt M."/>
            <person name="Kanapin A."/>
            <person name="Katoh M."/>
            <person name="Kawasawa Y."/>
            <person name="Kelso J."/>
            <person name="Kitamura H."/>
            <person name="Kitano H."/>
            <person name="Kollias G."/>
            <person name="Krishnan S.P."/>
            <person name="Kruger A."/>
            <person name="Kummerfeld S.K."/>
            <person name="Kurochkin I.V."/>
            <person name="Lareau L.F."/>
            <person name="Lazarevic D."/>
            <person name="Lipovich L."/>
            <person name="Liu J."/>
            <person name="Liuni S."/>
            <person name="McWilliam S."/>
            <person name="Madan Babu M."/>
            <person name="Madera M."/>
            <person name="Marchionni L."/>
            <person name="Matsuda H."/>
            <person name="Matsuzawa S."/>
            <person name="Miki H."/>
            <person name="Mignone F."/>
            <person name="Miyake S."/>
            <person name="Morris K."/>
            <person name="Mottagui-Tabar S."/>
            <person name="Mulder N."/>
            <person name="Nakano N."/>
            <person name="Nakauchi H."/>
            <person name="Ng P."/>
            <person name="Nilsson R."/>
            <person name="Nishiguchi S."/>
            <person name="Nishikawa S."/>
            <person name="Nori F."/>
            <person name="Ohara O."/>
            <person name="Okazaki Y."/>
            <person name="Orlando V."/>
            <person name="Pang K.C."/>
            <person name="Pavan W.J."/>
            <person name="Pavesi G."/>
            <person name="Pesole G."/>
            <person name="Petrovsky N."/>
            <person name="Piazza S."/>
            <person name="Reed J."/>
            <person name="Reid J.F."/>
            <person name="Ring B.Z."/>
            <person name="Ringwald M."/>
            <person name="Rost B."/>
            <person name="Ruan Y."/>
            <person name="Salzberg S.L."/>
            <person name="Sandelin A."/>
            <person name="Schneider C."/>
            <person name="Schoenbach C."/>
            <person name="Sekiguchi K."/>
            <person name="Semple C.A."/>
            <person name="Seno S."/>
            <person name="Sessa L."/>
            <person name="Sheng Y."/>
            <person name="Shibata Y."/>
            <person name="Shimada H."/>
            <person name="Shimada K."/>
            <person name="Silva D."/>
            <person name="Sinclair B."/>
            <person name="Sperling S."/>
            <person name="Stupka E."/>
            <person name="Sugiura K."/>
            <person name="Sultana R."/>
            <person name="Takenaka Y."/>
            <person name="Taki K."/>
            <person name="Tammoja K."/>
            <person name="Tan S.L."/>
            <person name="Tang S."/>
            <person name="Taylor M.S."/>
            <person name="Tegner J."/>
            <person name="Teichmann S.A."/>
            <person name="Ueda H.R."/>
            <person name="van Nimwegen E."/>
            <person name="Verardo R."/>
            <person name="Wei C.L."/>
            <person name="Yagi K."/>
            <person name="Yamanishi H."/>
            <person name="Zabarovsky E."/>
            <person name="Zhu S."/>
            <person name="Zimmer A."/>
            <person name="Hide W."/>
            <person name="Bult C."/>
            <person name="Grimmond S.M."/>
            <person name="Teasdale R.D."/>
            <person name="Liu E.T."/>
            <person name="Brusic V."/>
            <person name="Quackenbush J."/>
            <person name="Wahlestedt C."/>
            <person name="Mattick J.S."/>
            <person name="Hume D.A."/>
            <person name="Kai C."/>
            <person name="Sasaki D."/>
            <person name="Tomaru Y."/>
            <person name="Fukuda S."/>
            <person name="Kanamori-Katayama M."/>
            <person name="Suzuki M."/>
            <person name="Aoki J."/>
            <person name="Arakawa T."/>
            <person name="Iida J."/>
            <person name="Imamura K."/>
            <person name="Itoh M."/>
            <person name="Kato T."/>
            <person name="Kawaji H."/>
            <person name="Kawagashira N."/>
            <person name="Kawashima T."/>
            <person name="Kojima M."/>
            <person name="Kondo S."/>
            <person name="Konno H."/>
            <person name="Nakano K."/>
            <person name="Ninomiya N."/>
            <person name="Nishio T."/>
            <person name="Okada M."/>
            <person name="Plessy C."/>
            <person name="Shibata K."/>
            <person name="Shiraki T."/>
            <person name="Suzuki S."/>
            <person name="Tagami M."/>
            <person name="Waki K."/>
            <person name="Watahiki A."/>
            <person name="Okamura-Oho Y."/>
            <person name="Suzuki H."/>
            <person name="Kawai J."/>
            <person name="Hayashizaki Y."/>
        </authorList>
    </citation>
    <scope>NUCLEOTIDE SEQUENCE [LARGE SCALE MRNA] (ISOFORM 1)</scope>
    <source>
        <strain>C57BL/6J</strain>
        <tissue>Testis</tissue>
    </source>
</reference>
<reference key="2">
    <citation type="submission" date="2005-07" db="EMBL/GenBank/DDBJ databases">
        <authorList>
            <person name="Mural R.J."/>
            <person name="Adams M.D."/>
            <person name="Myers E.W."/>
            <person name="Smith H.O."/>
            <person name="Venter J.C."/>
        </authorList>
    </citation>
    <scope>NUCLEOTIDE SEQUENCE [LARGE SCALE GENOMIC DNA]</scope>
</reference>
<reference key="3">
    <citation type="journal article" date="2004" name="Genome Res.">
        <title>The status, quality, and expansion of the NIH full-length cDNA project: the Mammalian Gene Collection (MGC).</title>
        <authorList>
            <consortium name="The MGC Project Team"/>
        </authorList>
    </citation>
    <scope>NUCLEOTIDE SEQUENCE [LARGE SCALE MRNA] (ISOFORMS 1 AND 2)</scope>
    <source>
        <tissue>Brain</tissue>
    </source>
</reference>
<reference key="4">
    <citation type="journal article" date="2010" name="Cell">
        <title>A tissue-specific atlas of mouse protein phosphorylation and expression.</title>
        <authorList>
            <person name="Huttlin E.L."/>
            <person name="Jedrychowski M.P."/>
            <person name="Elias J.E."/>
            <person name="Goswami T."/>
            <person name="Rad R."/>
            <person name="Beausoleil S.A."/>
            <person name="Villen J."/>
            <person name="Haas W."/>
            <person name="Sowa M.E."/>
            <person name="Gygi S.P."/>
        </authorList>
    </citation>
    <scope>IDENTIFICATION BY MASS SPECTROMETRY [LARGE SCALE ANALYSIS]</scope>
    <source>
        <tissue>Testis</tissue>
    </source>
</reference>
<evidence type="ECO:0000256" key="1">
    <source>
        <dbReference type="SAM" id="MobiDB-lite"/>
    </source>
</evidence>
<evidence type="ECO:0000303" key="2">
    <source>
    </source>
</evidence>